<reference key="1">
    <citation type="journal article" date="1988" name="J. Virol.">
        <title>Sequence and transcriptional analysis of the vaccinia virus HindIII I fragment.</title>
        <authorList>
            <person name="Schmitt J.F.C."/>
            <person name="Stunnenberg H.G."/>
        </authorList>
    </citation>
    <scope>NUCLEOTIDE SEQUENCE [GENOMIC DNA]</scope>
</reference>
<reference key="2">
    <citation type="submission" date="2003-02" db="EMBL/GenBank/DDBJ databases">
        <title>Sequencing of the coding region of Vaccinia-WR to an average 9-fold redundancy and an error rate of 0.16/10kb.</title>
        <authorList>
            <person name="Esposito J.J."/>
            <person name="Frace A.M."/>
            <person name="Sammons S.A."/>
            <person name="Olsen-Rasmussen M."/>
            <person name="Osborne J."/>
            <person name="Wohlhueter R."/>
        </authorList>
    </citation>
    <scope>NUCLEOTIDE SEQUENCE [LARGE SCALE GENOMIC DNA]</scope>
</reference>
<reference key="3">
    <citation type="journal article" date="1993" name="Proc. Natl. Acad. Sci. U.S.A.">
        <title>Acidic C terminus of vaccinia virus DNA-binding protein interacts with ribonucleotide reductase.</title>
        <authorList>
            <person name="Davis R.E."/>
            <person name="Mathews C.K."/>
        </authorList>
    </citation>
    <scope>INTERACTION WITH THE SMALL SUBUNIT OF RIBONUCLEOTIDE REDUCTASE</scope>
</reference>
<reference key="4">
    <citation type="journal article" date="1999" name="J. Biol. Chem.">
        <title>DNA binding and aggregation properties of the vaccinia virus I3L gene product.</title>
        <authorList>
            <person name="Tseng M."/>
            <person name="Palaniyar N."/>
            <person name="Zhang W."/>
            <person name="Evans D.H."/>
        </authorList>
    </citation>
    <scope>DNA-BINDING</scope>
    <scope>SUBUNIT</scope>
</reference>
<reference key="5">
    <citation type="journal article" date="2003" name="J. Virol.">
        <title>The vaccinia virus I3L gene product is localized to a complex endoplasmic reticulum-associated structure that contains the viral parental DNA.</title>
        <authorList>
            <person name="Welsch S."/>
            <person name="Doglio L."/>
            <person name="Schleich S."/>
            <person name="Krijnse Locker J."/>
        </authorList>
    </citation>
    <scope>SUBCELLULAR LOCATION</scope>
    <scope>INDUCTION</scope>
</reference>
<reference key="6">
    <citation type="journal article" date="2012" name="J. Virol.">
        <title>Molecular genetic and biochemical characterization of the vaccinia virus I3 protein, the replicative single-stranded DNA binding protein.</title>
        <authorList>
            <person name="Greseth M.D."/>
            <person name="Boyle K.A."/>
            <person name="Bluma M.S."/>
            <person name="Unger B."/>
            <person name="Wiebe M.S."/>
            <person name="Soares-Martins J.A."/>
            <person name="Wickramasekera N.T."/>
            <person name="Wahlberg J."/>
            <person name="Traktman P."/>
        </authorList>
    </citation>
    <scope>FUNCTION</scope>
    <scope>SUBCELLULAR LOCATION</scope>
</reference>
<reference key="7">
    <citation type="journal article" date="2015" name="J. Virol.">
        <title>Deciphering poxvirus gene expression by RNA sequencing and ribosome profiling.</title>
        <authorList>
            <person name="Yang Z."/>
            <person name="Cao S."/>
            <person name="Martens C.A."/>
            <person name="Porcella S.F."/>
            <person name="Xie Z."/>
            <person name="Ma M."/>
            <person name="Shen B."/>
            <person name="Moss B."/>
        </authorList>
    </citation>
    <scope>INDUCTION</scope>
</reference>
<reference key="8">
    <citation type="journal article" date="2016" name="Virology">
        <title>The acidic C-terminus of vaccinia virus I3 single-strand binding protein promotes proper assembly of DNA-protein complexes.</title>
        <authorList>
            <person name="Harrison M.L."/>
            <person name="Desaulniers M.A."/>
            <person name="Noyce R.S."/>
            <person name="Evans D.H."/>
        </authorList>
    </citation>
    <scope>FUNCTION</scope>
</reference>
<reference key="9">
    <citation type="journal article" date="2023" name="Proc. Natl. Acad. Sci. U.S.A.">
        <title>Human FAM111A inhibits vaccinia virus replication by degrading viral protein I3 and is antagonized by poxvirus host range factor SPI-1.</title>
        <authorList>
            <person name="Zhu J."/>
            <person name="Gao X."/>
            <person name="Li Y."/>
            <person name="Zhang Z."/>
            <person name="Xie S."/>
            <person name="Ren S."/>
            <person name="Li Y."/>
            <person name="Li H."/>
            <person name="Niu K."/>
            <person name="Fu S."/>
            <person name="Deng Y."/>
            <person name="Li Y."/>
            <person name="Moss B."/>
            <person name="Wu W."/>
            <person name="Peng C."/>
        </authorList>
    </citation>
    <scope>SUBCELLULAR LOCATION</scope>
    <scope>INTERACTION WITH HOST FAM111A</scope>
</reference>
<evidence type="ECO:0000269" key="1">
    <source>
    </source>
</evidence>
<evidence type="ECO:0000269" key="2">
    <source>
    </source>
</evidence>
<evidence type="ECO:0000269" key="3">
    <source>
    </source>
</evidence>
<evidence type="ECO:0000269" key="4">
    <source>
    </source>
</evidence>
<evidence type="ECO:0000269" key="5">
    <source>
    </source>
</evidence>
<evidence type="ECO:0000269" key="6">
    <source>
    </source>
</evidence>
<evidence type="ECO:0000269" key="7">
    <source>
    </source>
</evidence>
<evidence type="ECO:0000305" key="8"/>
<organismHost>
    <name type="scientific">Bos taurus</name>
    <name type="common">Bovine</name>
    <dbReference type="NCBI Taxonomy" id="9913"/>
</organismHost>
<protein>
    <recommendedName>
        <fullName>Protein OPG079</fullName>
    </recommendedName>
    <alternativeName>
        <fullName>Protein I3</fullName>
    </alternativeName>
</protein>
<comment type="function">
    <text evidence="3 5">Plays an essential role in viral DNA replication. Binds to ssDNA with high affinity and localizes to cytoplasmic factories where nascent viral genomes accumulate. May disrupt loops, hairpins and other secondary structures present on ssDNA to reduce and eliminate pausing of viral DNA polymerase at specific sites during elongation.</text>
</comment>
<comment type="subunit">
    <text evidence="1 6 7">Homoomultimer (Potential). Interacts with the small subunit of ribonucleotide reductase. Interacts with host FAM111A; this interaction protomtes OPG079 degradation through autophagy (PubMed:37607234).</text>
</comment>
<comment type="subcellular location">
    <subcellularLocation>
        <location evidence="3 6">Host cytoplasm</location>
    </subcellularLocation>
    <text evidence="3">Localizes in cytoplasmic virus factories, where it is associated with viral DNA.</text>
</comment>
<comment type="induction">
    <text evidence="2 4">Expressed in the early phase of the viral replicative cycle.</text>
</comment>
<comment type="miscellaneous">
    <text>This protein is synthesized in the early as well as at the intermediate time of infection.</text>
</comment>
<comment type="similarity">
    <text evidence="8">Belongs to the orthopoxvirus OPG079 family.</text>
</comment>
<dbReference type="EMBL" id="J03399">
    <property type="protein sequence ID" value="AAB59805.1"/>
    <property type="molecule type" value="Genomic_DNA"/>
</dbReference>
<dbReference type="EMBL" id="AY243312">
    <property type="protein sequence ID" value="AAO89351.1"/>
    <property type="molecule type" value="Genomic_DNA"/>
</dbReference>
<dbReference type="PIR" id="C29889">
    <property type="entry name" value="WZVZI3"/>
</dbReference>
<dbReference type="RefSeq" id="YP_232954.1">
    <property type="nucleotide sequence ID" value="NC_006998.1"/>
</dbReference>
<dbReference type="DIP" id="DIP-2159N"/>
<dbReference type="MINT" id="P12923"/>
<dbReference type="DNASU" id="3707605"/>
<dbReference type="GeneID" id="3707605"/>
<dbReference type="KEGG" id="vg:3707605"/>
<dbReference type="Proteomes" id="UP000000344">
    <property type="component" value="Genome"/>
</dbReference>
<dbReference type="GO" id="GO:0030430">
    <property type="term" value="C:host cell cytoplasm"/>
    <property type="evidence" value="ECO:0000314"/>
    <property type="project" value="UniProtKB"/>
</dbReference>
<dbReference type="GO" id="GO:0003697">
    <property type="term" value="F:single-stranded DNA binding"/>
    <property type="evidence" value="ECO:0000314"/>
    <property type="project" value="UniProtKB"/>
</dbReference>
<dbReference type="GO" id="GO:0030261">
    <property type="term" value="P:chromosome condensation"/>
    <property type="evidence" value="ECO:0007669"/>
    <property type="project" value="UniProtKB-KW"/>
</dbReference>
<dbReference type="GO" id="GO:0039693">
    <property type="term" value="P:viral DNA genome replication"/>
    <property type="evidence" value="ECO:0000314"/>
    <property type="project" value="UniProtKB"/>
</dbReference>
<dbReference type="InterPro" id="IPR006754">
    <property type="entry name" value="Poxvirus_I3_ssDNA-bd"/>
</dbReference>
<dbReference type="Pfam" id="PF04661">
    <property type="entry name" value="Pox_I3"/>
    <property type="match status" value="1"/>
</dbReference>
<dbReference type="PIRSF" id="PIRSF003767">
    <property type="entry name" value="VAC_I3L"/>
    <property type="match status" value="1"/>
</dbReference>
<accession>P12923</accession>
<accession>Q76ZV0</accession>
<name>PG079_VACCW</name>
<sequence>MSKVIKKRVETSPRPTASSDSLQTCAGVIEYAKSISKSNAKCIEYVTLNASQYANCSSISIKLTDSLSSQMTSTFIMLEGETKLYKNKSKQDRSDGYFLKIKVTAASPMLYQLLEAVYGNIKHKERIPNSLHSLSVETITEKTFKDESIFINKLNGAMVEYVSTGESSILRSIEGELESLSKRERQLAKAIITPVVFYRSGTETKITFALKKLIIDREVVANVIGLSGDSERVSMTENVEEDLARNLGLVDIDDEYDEDSDKEKPIFNV</sequence>
<organism>
    <name type="scientific">Vaccinia virus (strain Western Reserve)</name>
    <name type="common">VACV</name>
    <name type="synonym">Vaccinia virus (strain WR)</name>
    <dbReference type="NCBI Taxonomy" id="10254"/>
    <lineage>
        <taxon>Viruses</taxon>
        <taxon>Varidnaviria</taxon>
        <taxon>Bamfordvirae</taxon>
        <taxon>Nucleocytoviricota</taxon>
        <taxon>Pokkesviricetes</taxon>
        <taxon>Chitovirales</taxon>
        <taxon>Poxviridae</taxon>
        <taxon>Chordopoxvirinae</taxon>
        <taxon>Orthopoxvirus</taxon>
        <taxon>Vaccinia virus</taxon>
    </lineage>
</organism>
<proteinExistence type="evidence at protein level"/>
<gene>
    <name type="primary">OPG079</name>
    <name type="ordered locus">VACWR072</name>
    <name type="ORF">I3L</name>
</gene>
<feature type="chain" id="PRO_0000099573" description="Protein OPG079">
    <location>
        <begin position="1"/>
        <end position="269"/>
    </location>
</feature>
<keyword id="KW-0226">DNA condensation</keyword>
<keyword id="KW-0238">DNA-binding</keyword>
<keyword id="KW-0244">Early protein</keyword>
<keyword id="KW-1035">Host cytoplasm</keyword>
<keyword id="KW-1185">Reference proteome</keyword>